<proteinExistence type="evidence at transcript level"/>
<evidence type="ECO:0000250" key="1">
    <source>
        <dbReference type="UniProtKB" id="Q5T7V8"/>
    </source>
</evidence>
<evidence type="ECO:0000255" key="2"/>
<evidence type="ECO:0000256" key="3">
    <source>
        <dbReference type="SAM" id="MobiDB-lite"/>
    </source>
</evidence>
<evidence type="ECO:0000305" key="4"/>
<reference key="1">
    <citation type="submission" date="2003-06" db="EMBL/GenBank/DDBJ databases">
        <authorList>
            <consortium name="NIH - Zebrafish Gene Collection (ZGC) project"/>
        </authorList>
    </citation>
    <scope>NUCLEOTIDE SEQUENCE [LARGE SCALE MRNA]</scope>
    <source>
        <tissue>Kidney</tissue>
    </source>
</reference>
<name>GORAB_DANRE</name>
<sequence>MAAWAGFSEEELRKLQHNGEVANQAVSVTLGRGRKPAQTNRSRQQLQRERALQLAAKQKEISQSLLPDQQLTRPPEPPASSHPAPPAETPDEQSVPVKHEAEPVKPDPASPVQSIPPADFKELDKQEVELREKNRLQQLQWEQRIMEEKNKKRKALLTKTIAEKSKQTQAEAIKLKKIQRELQVLDDSVSSDIGVLRKLIEQSSMDYSLAWKRFEKAEAEYVAAKMDLHRKTEVKEQLTEHLCAIIQQNELRKARKLEELMLQLELNAEEVPSPDQTQLQDKQKEPVTENGPAAELERCTEANGSSMSKDSSITETKISQDNQESEAADVSADGLR</sequence>
<accession>Q7T320</accession>
<comment type="subcellular location">
    <subcellularLocation>
        <location evidence="1">Cytoplasm</location>
    </subcellularLocation>
    <subcellularLocation>
        <location evidence="1">Golgi apparatus</location>
    </subcellularLocation>
</comment>
<comment type="similarity">
    <text evidence="4">Belongs to the GORAB family.</text>
</comment>
<protein>
    <recommendedName>
        <fullName>RAB6-interacting golgin</fullName>
    </recommendedName>
    <alternativeName>
        <fullName>N-terminal kinase-like-binding protein 1</fullName>
        <shortName>NTKL-BP1</shortName>
        <shortName>NTKL-binding protein 1</shortName>
    </alternativeName>
    <alternativeName>
        <fullName>SCY1-like 1-binding protein 1</fullName>
        <shortName>SCYL1-BP1</shortName>
        <shortName>SCYL1-binding protein 1</shortName>
    </alternativeName>
</protein>
<dbReference type="EMBL" id="BC053289">
    <property type="protein sequence ID" value="AAH53289.1"/>
    <property type="molecule type" value="mRNA"/>
</dbReference>
<dbReference type="RefSeq" id="NP_956679.1">
    <property type="nucleotide sequence ID" value="NM_200385.1"/>
</dbReference>
<dbReference type="SMR" id="Q7T320"/>
<dbReference type="FunCoup" id="Q7T320">
    <property type="interactions" value="772"/>
</dbReference>
<dbReference type="STRING" id="7955.ENSDARP00000115735"/>
<dbReference type="PaxDb" id="7955-ENSDARP00000115735"/>
<dbReference type="GeneID" id="393356"/>
<dbReference type="KEGG" id="dre:393356"/>
<dbReference type="AGR" id="ZFIN:ZDB-GENE-040426-1384"/>
<dbReference type="CTD" id="92344"/>
<dbReference type="ZFIN" id="ZDB-GENE-040426-1384">
    <property type="gene designation" value="gorab"/>
</dbReference>
<dbReference type="eggNOG" id="ENOG502R60M">
    <property type="taxonomic scope" value="Eukaryota"/>
</dbReference>
<dbReference type="InParanoid" id="Q7T320"/>
<dbReference type="OrthoDB" id="9909311at2759"/>
<dbReference type="PRO" id="PR:Q7T320"/>
<dbReference type="Proteomes" id="UP000000437">
    <property type="component" value="Chromosome 20"/>
</dbReference>
<dbReference type="GO" id="GO:0005794">
    <property type="term" value="C:Golgi apparatus"/>
    <property type="evidence" value="ECO:0007669"/>
    <property type="project" value="UniProtKB-SubCell"/>
</dbReference>
<dbReference type="GO" id="GO:1905515">
    <property type="term" value="P:non-motile cilium assembly"/>
    <property type="evidence" value="ECO:0000318"/>
    <property type="project" value="GO_Central"/>
</dbReference>
<dbReference type="InterPro" id="IPR007033">
    <property type="entry name" value="GORAB"/>
</dbReference>
<dbReference type="PANTHER" id="PTHR21470:SF2">
    <property type="entry name" value="RAB6-INTERACTING GOLGIN"/>
    <property type="match status" value="1"/>
</dbReference>
<dbReference type="PANTHER" id="PTHR21470">
    <property type="entry name" value="RAB6-INTERACTING PROTEIN GORAB"/>
    <property type="match status" value="1"/>
</dbReference>
<keyword id="KW-0175">Coiled coil</keyword>
<keyword id="KW-0963">Cytoplasm</keyword>
<keyword id="KW-0333">Golgi apparatus</keyword>
<keyword id="KW-1185">Reference proteome</keyword>
<feature type="chain" id="PRO_0000367460" description="RAB6-interacting golgin">
    <location>
        <begin position="1"/>
        <end position="336"/>
    </location>
</feature>
<feature type="region of interest" description="Disordered" evidence="3">
    <location>
        <begin position="26"/>
        <end position="118"/>
    </location>
</feature>
<feature type="region of interest" description="Disordered" evidence="3">
    <location>
        <begin position="268"/>
        <end position="336"/>
    </location>
</feature>
<feature type="coiled-coil region" evidence="2">
    <location>
        <begin position="213"/>
        <end position="271"/>
    </location>
</feature>
<feature type="compositionally biased region" description="Polar residues" evidence="3">
    <location>
        <begin position="61"/>
        <end position="72"/>
    </location>
</feature>
<feature type="compositionally biased region" description="Pro residues" evidence="3">
    <location>
        <begin position="74"/>
        <end position="88"/>
    </location>
</feature>
<feature type="compositionally biased region" description="Polar residues" evidence="3">
    <location>
        <begin position="302"/>
        <end position="322"/>
    </location>
</feature>
<gene>
    <name type="primary">gorab</name>
    <name type="synonym">scyl1bp1</name>
    <name type="ORF">zgc:64162</name>
</gene>
<organism>
    <name type="scientific">Danio rerio</name>
    <name type="common">Zebrafish</name>
    <name type="synonym">Brachydanio rerio</name>
    <dbReference type="NCBI Taxonomy" id="7955"/>
    <lineage>
        <taxon>Eukaryota</taxon>
        <taxon>Metazoa</taxon>
        <taxon>Chordata</taxon>
        <taxon>Craniata</taxon>
        <taxon>Vertebrata</taxon>
        <taxon>Euteleostomi</taxon>
        <taxon>Actinopterygii</taxon>
        <taxon>Neopterygii</taxon>
        <taxon>Teleostei</taxon>
        <taxon>Ostariophysi</taxon>
        <taxon>Cypriniformes</taxon>
        <taxon>Danionidae</taxon>
        <taxon>Danioninae</taxon>
        <taxon>Danio</taxon>
    </lineage>
</organism>